<protein>
    <recommendedName>
        <fullName>Taste receptor type 2 member 39</fullName>
        <shortName>T2R39</shortName>
    </recommendedName>
</protein>
<proteinExistence type="inferred from homology"/>
<dbReference type="EMBL" id="AY724926">
    <property type="protein sequence ID" value="AAU21132.1"/>
    <property type="molecule type" value="Genomic_DNA"/>
</dbReference>
<dbReference type="STRING" id="9593.ENSGGOP00000021160"/>
<dbReference type="GlyCosmos" id="Q645Y7">
    <property type="glycosylation" value="2 sites, No reported glycans"/>
</dbReference>
<dbReference type="eggNOG" id="ENOG502SQHF">
    <property type="taxonomic scope" value="Eukaryota"/>
</dbReference>
<dbReference type="InParanoid" id="Q645Y7"/>
<dbReference type="Proteomes" id="UP000001519">
    <property type="component" value="Unplaced"/>
</dbReference>
<dbReference type="GO" id="GO:0016020">
    <property type="term" value="C:membrane"/>
    <property type="evidence" value="ECO:0000318"/>
    <property type="project" value="GO_Central"/>
</dbReference>
<dbReference type="GO" id="GO:0005886">
    <property type="term" value="C:plasma membrane"/>
    <property type="evidence" value="ECO:0007669"/>
    <property type="project" value="UniProtKB-ARBA"/>
</dbReference>
<dbReference type="GO" id="GO:0033038">
    <property type="term" value="F:bitter taste receptor activity"/>
    <property type="evidence" value="ECO:0000318"/>
    <property type="project" value="GO_Central"/>
</dbReference>
<dbReference type="GO" id="GO:0004930">
    <property type="term" value="F:G protein-coupled receptor activity"/>
    <property type="evidence" value="ECO:0007669"/>
    <property type="project" value="UniProtKB-KW"/>
</dbReference>
<dbReference type="GO" id="GO:0001580">
    <property type="term" value="P:detection of chemical stimulus involved in sensory perception of bitter taste"/>
    <property type="evidence" value="ECO:0000318"/>
    <property type="project" value="GO_Central"/>
</dbReference>
<dbReference type="CDD" id="cd15015">
    <property type="entry name" value="7tm_TAS2R39"/>
    <property type="match status" value="1"/>
</dbReference>
<dbReference type="FunFam" id="1.20.1070.10:FF:000055">
    <property type="entry name" value="Taste receptor type 2"/>
    <property type="match status" value="1"/>
</dbReference>
<dbReference type="Gene3D" id="1.20.1070.10">
    <property type="entry name" value="Rhodopsin 7-helix transmembrane proteins"/>
    <property type="match status" value="1"/>
</dbReference>
<dbReference type="InterPro" id="IPR007960">
    <property type="entry name" value="TAS2R"/>
</dbReference>
<dbReference type="PANTHER" id="PTHR11394">
    <property type="entry name" value="TASTE RECEPTOR TYPE 2"/>
    <property type="match status" value="1"/>
</dbReference>
<dbReference type="PANTHER" id="PTHR11394:SF142">
    <property type="entry name" value="TASTE RECEPTOR TYPE 2 MEMBER 39"/>
    <property type="match status" value="1"/>
</dbReference>
<dbReference type="Pfam" id="PF05296">
    <property type="entry name" value="TAS2R"/>
    <property type="match status" value="1"/>
</dbReference>
<dbReference type="SUPFAM" id="SSF81321">
    <property type="entry name" value="Family A G protein-coupled receptor-like"/>
    <property type="match status" value="1"/>
</dbReference>
<accession>Q645Y7</accession>
<gene>
    <name type="primary">TAS2R39</name>
</gene>
<name>T2R39_GORGO</name>
<keyword id="KW-0297">G-protein coupled receptor</keyword>
<keyword id="KW-0325">Glycoprotein</keyword>
<keyword id="KW-0472">Membrane</keyword>
<keyword id="KW-0675">Receptor</keyword>
<keyword id="KW-1185">Reference proteome</keyword>
<keyword id="KW-0716">Sensory transduction</keyword>
<keyword id="KW-0919">Taste</keyword>
<keyword id="KW-0807">Transducer</keyword>
<keyword id="KW-0812">Transmembrane</keyword>
<keyword id="KW-1133">Transmembrane helix</keyword>
<organism>
    <name type="scientific">Gorilla gorilla gorilla</name>
    <name type="common">Western lowland gorilla</name>
    <dbReference type="NCBI Taxonomy" id="9595"/>
    <lineage>
        <taxon>Eukaryota</taxon>
        <taxon>Metazoa</taxon>
        <taxon>Chordata</taxon>
        <taxon>Craniata</taxon>
        <taxon>Vertebrata</taxon>
        <taxon>Euteleostomi</taxon>
        <taxon>Mammalia</taxon>
        <taxon>Eutheria</taxon>
        <taxon>Euarchontoglires</taxon>
        <taxon>Primates</taxon>
        <taxon>Haplorrhini</taxon>
        <taxon>Catarrhini</taxon>
        <taxon>Hominidae</taxon>
        <taxon>Gorilla</taxon>
    </lineage>
</organism>
<evidence type="ECO:0000250" key="1"/>
<evidence type="ECO:0000255" key="2"/>
<evidence type="ECO:0000305" key="3"/>
<feature type="chain" id="PRO_0000082280" description="Taste receptor type 2 member 39">
    <location>
        <begin position="1"/>
        <end position="338"/>
    </location>
</feature>
<feature type="topological domain" description="Extracellular" evidence="2">
    <location>
        <begin position="1"/>
        <end position="30"/>
    </location>
</feature>
<feature type="transmembrane region" description="Helical; Name=1" evidence="2">
    <location>
        <begin position="31"/>
        <end position="51"/>
    </location>
</feature>
<feature type="topological domain" description="Cytoplasmic" evidence="2">
    <location>
        <begin position="52"/>
        <end position="74"/>
    </location>
</feature>
<feature type="transmembrane region" description="Helical; Name=2" evidence="2">
    <location>
        <begin position="75"/>
        <end position="95"/>
    </location>
</feature>
<feature type="topological domain" description="Extracellular" evidence="2">
    <location>
        <begin position="96"/>
        <end position="116"/>
    </location>
</feature>
<feature type="transmembrane region" description="Helical; Name=3" evidence="2">
    <location>
        <begin position="117"/>
        <end position="137"/>
    </location>
</feature>
<feature type="topological domain" description="Cytoplasmic" evidence="2">
    <location>
        <begin position="138"/>
        <end position="156"/>
    </location>
</feature>
<feature type="transmembrane region" description="Helical; Name=4" evidence="2">
    <location>
        <begin position="157"/>
        <end position="177"/>
    </location>
</feature>
<feature type="topological domain" description="Extracellular" evidence="2">
    <location>
        <begin position="178"/>
        <end position="205"/>
    </location>
</feature>
<feature type="transmembrane region" description="Helical; Name=5" evidence="2">
    <location>
        <begin position="206"/>
        <end position="226"/>
    </location>
</feature>
<feature type="topological domain" description="Cytoplasmic" evidence="2">
    <location>
        <begin position="227"/>
        <end position="262"/>
    </location>
</feature>
<feature type="transmembrane region" description="Helical; Name=6" evidence="2">
    <location>
        <begin position="263"/>
        <end position="283"/>
    </location>
</feature>
<feature type="topological domain" description="Extracellular" evidence="2">
    <location>
        <begin position="284"/>
        <end position="291"/>
    </location>
</feature>
<feature type="transmembrane region" description="Helical; Name=7" evidence="2">
    <location>
        <begin position="292"/>
        <end position="312"/>
    </location>
</feature>
<feature type="topological domain" description="Cytoplasmic" evidence="2">
    <location>
        <begin position="313"/>
        <end position="338"/>
    </location>
</feature>
<feature type="glycosylation site" description="N-linked (GlcNAc...) asparagine" evidence="2">
    <location>
        <position position="185"/>
    </location>
</feature>
<feature type="glycosylation site" description="N-linked (GlcNAc...) asparagine" evidence="2">
    <location>
        <position position="194"/>
    </location>
</feature>
<sequence length="338" mass="38622">MLGRCFPPDTKEKQQLRMTKLCDPAESELSPFLITLILAVLLAEYLIGIIANGFIMAIHAAEWVQNKAVSTSGRILVFLSVSRIALQSLMMLEITISSTSLSFYSEDAVYYAFKISFIFLNFCSLWFAAWLSFFYFVKIANFSYPLFLKLRWRITGLIPWLLWLSVFISFSHSMFCINIXTVYCNNSFPIHSSNSTKKTYLSEINVVGLAFFFNLGIVTPLIMFILTATLLILSLKRHTLHMGSNATGSNDPSMEAHMGAIKATSYFLILYIFNAVALFIYLSNMFDINSLWNNLCQIIMAAYPASHSILLIQDNPGLRRAWKRLQLRLHLYPKEWTL</sequence>
<comment type="function">
    <text evidence="1">Receptor that may play a role in the perception of bitterness and is gustducin-linked. May play a role in sensing the chemical composition of the gastrointestinal content. The activity of this receptor may stimulate alpha gustducin, mediate PLC-beta-2 activation and lead to the gating of TRPM5 (By similarity).</text>
</comment>
<comment type="subcellular location">
    <subcellularLocation>
        <location>Membrane</location>
        <topology>Multi-pass membrane protein</topology>
    </subcellularLocation>
</comment>
<comment type="miscellaneous">
    <text>Most taste cells may be activated by a limited number of bitter compounds; individual taste cells can discriminate among bitter stimuli.</text>
</comment>
<comment type="similarity">
    <text evidence="3">Belongs to the G-protein coupled receptor T2R family.</text>
</comment>
<reference key="1">
    <citation type="journal article" date="2005" name="Mol. Biol. Evol.">
        <title>Evolution of bitter taste receptors in humans and apes.</title>
        <authorList>
            <person name="Fischer A."/>
            <person name="Gilad Y."/>
            <person name="Man O."/>
            <person name="Paeaebo S."/>
        </authorList>
    </citation>
    <scope>NUCLEOTIDE SEQUENCE [GENOMIC DNA]</scope>
</reference>